<comment type="similarity">
    <text evidence="1">Belongs to the UPF0246 family.</text>
</comment>
<proteinExistence type="inferred from homology"/>
<dbReference type="EMBL" id="AL513382">
    <property type="protein sequence ID" value="CAD01158.1"/>
    <property type="molecule type" value="Genomic_DNA"/>
</dbReference>
<dbReference type="EMBL" id="AE014613">
    <property type="protein sequence ID" value="AAO67739.1"/>
    <property type="molecule type" value="Genomic_DNA"/>
</dbReference>
<dbReference type="RefSeq" id="NP_454615.1">
    <property type="nucleotide sequence ID" value="NC_003198.1"/>
</dbReference>
<dbReference type="RefSeq" id="WP_000906171.1">
    <property type="nucleotide sequence ID" value="NZ_WSUR01000014.1"/>
</dbReference>
<dbReference type="SMR" id="Q8Z9R5"/>
<dbReference type="STRING" id="220341.gene:17584060"/>
<dbReference type="KEGG" id="stt:t0005"/>
<dbReference type="KEGG" id="sty:STY0005"/>
<dbReference type="PATRIC" id="fig|220341.7.peg.4"/>
<dbReference type="eggNOG" id="COG3022">
    <property type="taxonomic scope" value="Bacteria"/>
</dbReference>
<dbReference type="HOGENOM" id="CLU_061989_0_0_6"/>
<dbReference type="OMA" id="WKNGQYK"/>
<dbReference type="OrthoDB" id="9777133at2"/>
<dbReference type="Proteomes" id="UP000000541">
    <property type="component" value="Chromosome"/>
</dbReference>
<dbReference type="Proteomes" id="UP000002670">
    <property type="component" value="Chromosome"/>
</dbReference>
<dbReference type="GO" id="GO:0005829">
    <property type="term" value="C:cytosol"/>
    <property type="evidence" value="ECO:0007669"/>
    <property type="project" value="TreeGrafter"/>
</dbReference>
<dbReference type="GO" id="GO:0033194">
    <property type="term" value="P:response to hydroperoxide"/>
    <property type="evidence" value="ECO:0007669"/>
    <property type="project" value="TreeGrafter"/>
</dbReference>
<dbReference type="HAMAP" id="MF_00652">
    <property type="entry name" value="UPF0246"/>
    <property type="match status" value="1"/>
</dbReference>
<dbReference type="InterPro" id="IPR005583">
    <property type="entry name" value="YaaA"/>
</dbReference>
<dbReference type="NCBIfam" id="NF002541">
    <property type="entry name" value="PRK02101.1-1"/>
    <property type="match status" value="1"/>
</dbReference>
<dbReference type="NCBIfam" id="NF002542">
    <property type="entry name" value="PRK02101.1-3"/>
    <property type="match status" value="1"/>
</dbReference>
<dbReference type="PANTHER" id="PTHR30283:SF4">
    <property type="entry name" value="PEROXIDE STRESS RESISTANCE PROTEIN YAAA"/>
    <property type="match status" value="1"/>
</dbReference>
<dbReference type="PANTHER" id="PTHR30283">
    <property type="entry name" value="PEROXIDE STRESS RESPONSE PROTEIN YAAA"/>
    <property type="match status" value="1"/>
</dbReference>
<dbReference type="Pfam" id="PF03883">
    <property type="entry name" value="H2O2_YaaD"/>
    <property type="match status" value="1"/>
</dbReference>
<accession>Q8Z9R5</accession>
<reference key="1">
    <citation type="journal article" date="2001" name="Nature">
        <title>Complete genome sequence of a multiple drug resistant Salmonella enterica serovar Typhi CT18.</title>
        <authorList>
            <person name="Parkhill J."/>
            <person name="Dougan G."/>
            <person name="James K.D."/>
            <person name="Thomson N.R."/>
            <person name="Pickard D."/>
            <person name="Wain J."/>
            <person name="Churcher C.M."/>
            <person name="Mungall K.L."/>
            <person name="Bentley S.D."/>
            <person name="Holden M.T.G."/>
            <person name="Sebaihia M."/>
            <person name="Baker S."/>
            <person name="Basham D."/>
            <person name="Brooks K."/>
            <person name="Chillingworth T."/>
            <person name="Connerton P."/>
            <person name="Cronin A."/>
            <person name="Davis P."/>
            <person name="Davies R.M."/>
            <person name="Dowd L."/>
            <person name="White N."/>
            <person name="Farrar J."/>
            <person name="Feltwell T."/>
            <person name="Hamlin N."/>
            <person name="Haque A."/>
            <person name="Hien T.T."/>
            <person name="Holroyd S."/>
            <person name="Jagels K."/>
            <person name="Krogh A."/>
            <person name="Larsen T.S."/>
            <person name="Leather S."/>
            <person name="Moule S."/>
            <person name="O'Gaora P."/>
            <person name="Parry C."/>
            <person name="Quail M.A."/>
            <person name="Rutherford K.M."/>
            <person name="Simmonds M."/>
            <person name="Skelton J."/>
            <person name="Stevens K."/>
            <person name="Whitehead S."/>
            <person name="Barrell B.G."/>
        </authorList>
    </citation>
    <scope>NUCLEOTIDE SEQUENCE [LARGE SCALE GENOMIC DNA]</scope>
    <source>
        <strain>CT18</strain>
    </source>
</reference>
<reference key="2">
    <citation type="journal article" date="2003" name="J. Bacteriol.">
        <title>Comparative genomics of Salmonella enterica serovar Typhi strains Ty2 and CT18.</title>
        <authorList>
            <person name="Deng W."/>
            <person name="Liou S.-R."/>
            <person name="Plunkett G. III"/>
            <person name="Mayhew G.F."/>
            <person name="Rose D.J."/>
            <person name="Burland V."/>
            <person name="Kodoyianni V."/>
            <person name="Schwartz D.C."/>
            <person name="Blattner F.R."/>
        </authorList>
    </citation>
    <scope>NUCLEOTIDE SEQUENCE [LARGE SCALE GENOMIC DNA]</scope>
    <source>
        <strain>ATCC 700931 / Ty2</strain>
    </source>
</reference>
<sequence>MLILISPAKTLDYQSPLATTRYTQPELLDHSQQLIQQARQLSAPQISRLMGISDKLADLNATRFHDWQPHFTPDNARQAILAFKGDVYTGLQAETFNDADFDFAQQHLRMLSGLYGVLRPLDLMQPYRLEMGIRLENPRGKDLYQFWGDIITDKLNEALEAQGDRVVVNLASEEYFKSVKPKKLDAELIKPVFLDEKNGKFKVVSFYAKKARGLMSRFIIENRLTKPEQLTAFDREGYFFDEETSTQDELVFKRYEQ</sequence>
<organism>
    <name type="scientific">Salmonella typhi</name>
    <dbReference type="NCBI Taxonomy" id="90370"/>
    <lineage>
        <taxon>Bacteria</taxon>
        <taxon>Pseudomonadati</taxon>
        <taxon>Pseudomonadota</taxon>
        <taxon>Gammaproteobacteria</taxon>
        <taxon>Enterobacterales</taxon>
        <taxon>Enterobacteriaceae</taxon>
        <taxon>Salmonella</taxon>
    </lineage>
</organism>
<gene>
    <name evidence="1" type="primary">yaaA</name>
    <name type="ordered locus">STY0005</name>
    <name type="ordered locus">t0005</name>
</gene>
<feature type="chain" id="PRO_0000204001" description="UPF0246 protein YaaA">
    <location>
        <begin position="1"/>
        <end position="257"/>
    </location>
</feature>
<name>YAAA_SALTI</name>
<protein>
    <recommendedName>
        <fullName evidence="1">UPF0246 protein YaaA</fullName>
    </recommendedName>
</protein>
<evidence type="ECO:0000255" key="1">
    <source>
        <dbReference type="HAMAP-Rule" id="MF_00652"/>
    </source>
</evidence>